<comment type="function">
    <text evidence="1">Required for the formation of a threonylcarbamoyl group on adenosine at position 37 (t(6)A37) in tRNAs that read codons beginning with adenine. Catalyzes the conversion of L-threonine, HCO(3)(-)/CO(2) and ATP to give threonylcarbamoyl-AMP (TC-AMP) as the acyladenylate intermediate, with the release of diphosphate.</text>
</comment>
<comment type="catalytic activity">
    <reaction evidence="1">
        <text>L-threonine + hydrogencarbonate + ATP = L-threonylcarbamoyladenylate + diphosphate + H2O</text>
        <dbReference type="Rhea" id="RHEA:36407"/>
        <dbReference type="ChEBI" id="CHEBI:15377"/>
        <dbReference type="ChEBI" id="CHEBI:17544"/>
        <dbReference type="ChEBI" id="CHEBI:30616"/>
        <dbReference type="ChEBI" id="CHEBI:33019"/>
        <dbReference type="ChEBI" id="CHEBI:57926"/>
        <dbReference type="ChEBI" id="CHEBI:73682"/>
        <dbReference type="EC" id="2.7.7.87"/>
    </reaction>
</comment>
<comment type="subcellular location">
    <subcellularLocation>
        <location evidence="1">Cytoplasm</location>
    </subcellularLocation>
</comment>
<comment type="similarity">
    <text evidence="1">Belongs to the SUA5 family. TsaC subfamily.</text>
</comment>
<evidence type="ECO:0000255" key="1">
    <source>
        <dbReference type="HAMAP-Rule" id="MF_01852"/>
    </source>
</evidence>
<gene>
    <name evidence="1" type="primary">tsaC</name>
    <name type="synonym">rimN</name>
    <name type="ordered locus">Pfl01_0020</name>
</gene>
<protein>
    <recommendedName>
        <fullName evidence="1">Threonylcarbamoyl-AMP synthase</fullName>
        <shortName evidence="1">TC-AMP synthase</shortName>
        <ecNumber evidence="1">2.7.7.87</ecNumber>
    </recommendedName>
    <alternativeName>
        <fullName evidence="1">L-threonylcarbamoyladenylate synthase</fullName>
    </alternativeName>
    <alternativeName>
        <fullName evidence="1">t(6)A37 threonylcarbamoyladenosine biosynthesis protein TsaC</fullName>
    </alternativeName>
    <alternativeName>
        <fullName evidence="1">tRNA threonylcarbamoyladenosine biosynthesis protein TsaC</fullName>
    </alternativeName>
</protein>
<accession>Q3KKE2</accession>
<name>TSAC_PSEPF</name>
<keyword id="KW-0067">ATP-binding</keyword>
<keyword id="KW-0963">Cytoplasm</keyword>
<keyword id="KW-0547">Nucleotide-binding</keyword>
<keyword id="KW-0548">Nucleotidyltransferase</keyword>
<keyword id="KW-0808">Transferase</keyword>
<keyword id="KW-0819">tRNA processing</keyword>
<organism>
    <name type="scientific">Pseudomonas fluorescens (strain Pf0-1)</name>
    <dbReference type="NCBI Taxonomy" id="205922"/>
    <lineage>
        <taxon>Bacteria</taxon>
        <taxon>Pseudomonadati</taxon>
        <taxon>Pseudomonadota</taxon>
        <taxon>Gammaproteobacteria</taxon>
        <taxon>Pseudomonadales</taxon>
        <taxon>Pseudomonadaceae</taxon>
        <taxon>Pseudomonas</taxon>
    </lineage>
</organism>
<reference key="1">
    <citation type="journal article" date="2009" name="Genome Biol.">
        <title>Genomic and genetic analyses of diversity and plant interactions of Pseudomonas fluorescens.</title>
        <authorList>
            <person name="Silby M.W."/>
            <person name="Cerdeno-Tarraga A.M."/>
            <person name="Vernikos G.S."/>
            <person name="Giddens S.R."/>
            <person name="Jackson R.W."/>
            <person name="Preston G.M."/>
            <person name="Zhang X.-X."/>
            <person name="Moon C.D."/>
            <person name="Gehrig S.M."/>
            <person name="Godfrey S.A.C."/>
            <person name="Knight C.G."/>
            <person name="Malone J.G."/>
            <person name="Robinson Z."/>
            <person name="Spiers A.J."/>
            <person name="Harris S."/>
            <person name="Challis G.L."/>
            <person name="Yaxley A.M."/>
            <person name="Harris D."/>
            <person name="Seeger K."/>
            <person name="Murphy L."/>
            <person name="Rutter S."/>
            <person name="Squares R."/>
            <person name="Quail M.A."/>
            <person name="Saunders E."/>
            <person name="Mavromatis K."/>
            <person name="Brettin T.S."/>
            <person name="Bentley S.D."/>
            <person name="Hothersall J."/>
            <person name="Stephens E."/>
            <person name="Thomas C.M."/>
            <person name="Parkhill J."/>
            <person name="Levy S.B."/>
            <person name="Rainey P.B."/>
            <person name="Thomson N.R."/>
        </authorList>
    </citation>
    <scope>NUCLEOTIDE SEQUENCE [LARGE SCALE GENOMIC DNA]</scope>
    <source>
        <strain>Pf0-1</strain>
    </source>
</reference>
<sequence length="185" mass="20612">MVNSWRVQQAAREIRAGAVIAYPTEAVWGLGCDPWNEEAVDRLLAIKNRSVDKGLILVADNIRQFDFLFEDFPQDWIDRMASTWPGPNTWLVPHQNLLPEWVTGVHDTVALRVSDHPQVRDLCSLVGPLISTSANPQGRPAARTRLRVEQYFRGQVDLVLGGALGGRKNPSLIRDLATGNIVRPA</sequence>
<proteinExistence type="inferred from homology"/>
<feature type="chain" id="PRO_0000352953" description="Threonylcarbamoyl-AMP synthase">
    <location>
        <begin position="1"/>
        <end position="185"/>
    </location>
</feature>
<feature type="domain" description="YrdC-like" evidence="1">
    <location>
        <begin position="4"/>
        <end position="185"/>
    </location>
</feature>
<dbReference type="EC" id="2.7.7.87" evidence="1"/>
<dbReference type="EMBL" id="CP000094">
    <property type="protein sequence ID" value="ABA71764.1"/>
    <property type="molecule type" value="Genomic_DNA"/>
</dbReference>
<dbReference type="RefSeq" id="WP_011331748.1">
    <property type="nucleotide sequence ID" value="NC_007492.2"/>
</dbReference>
<dbReference type="SMR" id="Q3KKE2"/>
<dbReference type="KEGG" id="pfo:Pfl01_0020"/>
<dbReference type="eggNOG" id="COG0009">
    <property type="taxonomic scope" value="Bacteria"/>
</dbReference>
<dbReference type="HOGENOM" id="CLU_031397_6_0_6"/>
<dbReference type="Proteomes" id="UP000002704">
    <property type="component" value="Chromosome"/>
</dbReference>
<dbReference type="GO" id="GO:0005737">
    <property type="term" value="C:cytoplasm"/>
    <property type="evidence" value="ECO:0007669"/>
    <property type="project" value="UniProtKB-SubCell"/>
</dbReference>
<dbReference type="GO" id="GO:0005524">
    <property type="term" value="F:ATP binding"/>
    <property type="evidence" value="ECO:0007669"/>
    <property type="project" value="UniProtKB-UniRule"/>
</dbReference>
<dbReference type="GO" id="GO:0003725">
    <property type="term" value="F:double-stranded RNA binding"/>
    <property type="evidence" value="ECO:0007669"/>
    <property type="project" value="InterPro"/>
</dbReference>
<dbReference type="GO" id="GO:0061710">
    <property type="term" value="F:L-threonylcarbamoyladenylate synthase"/>
    <property type="evidence" value="ECO:0007669"/>
    <property type="project" value="UniProtKB-EC"/>
</dbReference>
<dbReference type="GO" id="GO:0000049">
    <property type="term" value="F:tRNA binding"/>
    <property type="evidence" value="ECO:0007669"/>
    <property type="project" value="TreeGrafter"/>
</dbReference>
<dbReference type="GO" id="GO:0006450">
    <property type="term" value="P:regulation of translational fidelity"/>
    <property type="evidence" value="ECO:0007669"/>
    <property type="project" value="TreeGrafter"/>
</dbReference>
<dbReference type="GO" id="GO:0002949">
    <property type="term" value="P:tRNA threonylcarbamoyladenosine modification"/>
    <property type="evidence" value="ECO:0007669"/>
    <property type="project" value="UniProtKB-UniRule"/>
</dbReference>
<dbReference type="FunFam" id="3.90.870.10:FF:000004">
    <property type="entry name" value="Threonylcarbamoyl-AMP synthase"/>
    <property type="match status" value="1"/>
</dbReference>
<dbReference type="Gene3D" id="3.90.870.10">
    <property type="entry name" value="DHBP synthase"/>
    <property type="match status" value="1"/>
</dbReference>
<dbReference type="HAMAP" id="MF_01852">
    <property type="entry name" value="TsaC"/>
    <property type="match status" value="1"/>
</dbReference>
<dbReference type="InterPro" id="IPR017945">
    <property type="entry name" value="DHBP_synth_RibB-like_a/b_dom"/>
</dbReference>
<dbReference type="InterPro" id="IPR006070">
    <property type="entry name" value="Sua5-like_dom"/>
</dbReference>
<dbReference type="InterPro" id="IPR023535">
    <property type="entry name" value="TC-AMP_synthase"/>
</dbReference>
<dbReference type="InterPro" id="IPR050156">
    <property type="entry name" value="TC-AMP_synthase_SUA5"/>
</dbReference>
<dbReference type="PANTHER" id="PTHR17490">
    <property type="entry name" value="SUA5"/>
    <property type="match status" value="1"/>
</dbReference>
<dbReference type="PANTHER" id="PTHR17490:SF18">
    <property type="entry name" value="THREONYLCARBAMOYL-AMP SYNTHASE"/>
    <property type="match status" value="1"/>
</dbReference>
<dbReference type="Pfam" id="PF01300">
    <property type="entry name" value="Sua5_yciO_yrdC"/>
    <property type="match status" value="1"/>
</dbReference>
<dbReference type="SUPFAM" id="SSF55821">
    <property type="entry name" value="YrdC/RibB"/>
    <property type="match status" value="1"/>
</dbReference>
<dbReference type="PROSITE" id="PS51163">
    <property type="entry name" value="YRDC"/>
    <property type="match status" value="1"/>
</dbReference>